<sequence>MQSYFNELEQVRYEGSQSTNPLAFHHYNPDEMILGKRMADHLRFAACYWHTFCWGGADMFGANAFDRPWQQPGDALALAKRKAEVAFEFFHKLNVPYYCFHDVDVSPEGASLQEYLNNFAVMTDVLAEKQAASGVKLLWGTANCFTHPRYGAGAATNPDPEVFSWAATQVFTAMNATRQLGGENYVLWGGREGYETLLNTDLRQEREQIGRFMQMVVEHKHKTGFQGTLLIEPKPQEPTKHQYDYDVATVYGFLKQFGLEKEIKVNIEANHATLAGHSFHHEIASAIALGIFGSVDANRGDPQLGWDTDQFPNSVEENTLVMFEILKAGGFTTGGLNFDAKVRRQSTDKYDLFYGHIGAMDTMALALKFAAKMIEDGQLDQIVAKRYAGWNSELGQQILQGKMSLEELSRYASQHNLNPQHQSGHQELLENKVNRYLFG</sequence>
<name>XYLA_YERPB</name>
<proteinExistence type="inferred from homology"/>
<dbReference type="EC" id="5.3.1.5" evidence="1"/>
<dbReference type="EMBL" id="CP001048">
    <property type="protein sequence ID" value="ACC91054.1"/>
    <property type="molecule type" value="Genomic_DNA"/>
</dbReference>
<dbReference type="RefSeq" id="WP_002209593.1">
    <property type="nucleotide sequence ID" value="NZ_CP009780.1"/>
</dbReference>
<dbReference type="SMR" id="B2K7D2"/>
<dbReference type="GeneID" id="57974675"/>
<dbReference type="KEGG" id="ypb:YPTS_4108"/>
<dbReference type="PATRIC" id="fig|502801.10.peg.3581"/>
<dbReference type="GO" id="GO:0005737">
    <property type="term" value="C:cytoplasm"/>
    <property type="evidence" value="ECO:0007669"/>
    <property type="project" value="UniProtKB-SubCell"/>
</dbReference>
<dbReference type="GO" id="GO:0000287">
    <property type="term" value="F:magnesium ion binding"/>
    <property type="evidence" value="ECO:0007669"/>
    <property type="project" value="UniProtKB-UniRule"/>
</dbReference>
<dbReference type="GO" id="GO:0009045">
    <property type="term" value="F:xylose isomerase activity"/>
    <property type="evidence" value="ECO:0007669"/>
    <property type="project" value="UniProtKB-UniRule"/>
</dbReference>
<dbReference type="GO" id="GO:0042732">
    <property type="term" value="P:D-xylose metabolic process"/>
    <property type="evidence" value="ECO:0007669"/>
    <property type="project" value="UniProtKB-UniRule"/>
</dbReference>
<dbReference type="FunFam" id="3.20.20.150:FF:000002">
    <property type="entry name" value="Xylose isomerase"/>
    <property type="match status" value="1"/>
</dbReference>
<dbReference type="Gene3D" id="3.20.20.150">
    <property type="entry name" value="Divalent-metal-dependent TIM barrel enzymes"/>
    <property type="match status" value="1"/>
</dbReference>
<dbReference type="HAMAP" id="MF_00455">
    <property type="entry name" value="Xylose_isom_A"/>
    <property type="match status" value="1"/>
</dbReference>
<dbReference type="InterPro" id="IPR036237">
    <property type="entry name" value="Xyl_isomerase-like_sf"/>
</dbReference>
<dbReference type="InterPro" id="IPR013452">
    <property type="entry name" value="Xylose_isom_bac"/>
</dbReference>
<dbReference type="InterPro" id="IPR001998">
    <property type="entry name" value="Xylose_isomerase"/>
</dbReference>
<dbReference type="NCBIfam" id="NF003998">
    <property type="entry name" value="PRK05474.1"/>
    <property type="match status" value="1"/>
</dbReference>
<dbReference type="NCBIfam" id="TIGR02630">
    <property type="entry name" value="xylose_isom_A"/>
    <property type="match status" value="1"/>
</dbReference>
<dbReference type="PANTHER" id="PTHR48408">
    <property type="match status" value="1"/>
</dbReference>
<dbReference type="PANTHER" id="PTHR48408:SF1">
    <property type="entry name" value="XYLOSE ISOMERASE"/>
    <property type="match status" value="1"/>
</dbReference>
<dbReference type="PRINTS" id="PR00688">
    <property type="entry name" value="XYLOSISMRASE"/>
</dbReference>
<dbReference type="SUPFAM" id="SSF51658">
    <property type="entry name" value="Xylose isomerase-like"/>
    <property type="match status" value="1"/>
</dbReference>
<dbReference type="PROSITE" id="PS51415">
    <property type="entry name" value="XYLOSE_ISOMERASE"/>
    <property type="match status" value="1"/>
</dbReference>
<evidence type="ECO:0000255" key="1">
    <source>
        <dbReference type="HAMAP-Rule" id="MF_00455"/>
    </source>
</evidence>
<comment type="catalytic activity">
    <reaction evidence="1">
        <text>alpha-D-xylose = alpha-D-xylulofuranose</text>
        <dbReference type="Rhea" id="RHEA:22816"/>
        <dbReference type="ChEBI" id="CHEBI:28518"/>
        <dbReference type="ChEBI" id="CHEBI:188998"/>
        <dbReference type="EC" id="5.3.1.5"/>
    </reaction>
</comment>
<comment type="cofactor">
    <cofactor evidence="1">
        <name>Mg(2+)</name>
        <dbReference type="ChEBI" id="CHEBI:18420"/>
    </cofactor>
    <text evidence="1">Binds 2 magnesium ions per subunit.</text>
</comment>
<comment type="subunit">
    <text evidence="1">Homotetramer.</text>
</comment>
<comment type="subcellular location">
    <subcellularLocation>
        <location evidence="1">Cytoplasm</location>
    </subcellularLocation>
</comment>
<comment type="similarity">
    <text evidence="1">Belongs to the xylose isomerase family.</text>
</comment>
<keyword id="KW-0119">Carbohydrate metabolism</keyword>
<keyword id="KW-0963">Cytoplasm</keyword>
<keyword id="KW-0413">Isomerase</keyword>
<keyword id="KW-0460">Magnesium</keyword>
<keyword id="KW-0479">Metal-binding</keyword>
<keyword id="KW-0859">Xylose metabolism</keyword>
<reference key="1">
    <citation type="submission" date="2008-04" db="EMBL/GenBank/DDBJ databases">
        <title>Complete sequence of Yersinia pseudotuberculosis PB1/+.</title>
        <authorList>
            <person name="Copeland A."/>
            <person name="Lucas S."/>
            <person name="Lapidus A."/>
            <person name="Glavina del Rio T."/>
            <person name="Dalin E."/>
            <person name="Tice H."/>
            <person name="Bruce D."/>
            <person name="Goodwin L."/>
            <person name="Pitluck S."/>
            <person name="Munk A.C."/>
            <person name="Brettin T."/>
            <person name="Detter J.C."/>
            <person name="Han C."/>
            <person name="Tapia R."/>
            <person name="Schmutz J."/>
            <person name="Larimer F."/>
            <person name="Land M."/>
            <person name="Hauser L."/>
            <person name="Challacombe J.F."/>
            <person name="Green L."/>
            <person name="Lindler L.E."/>
            <person name="Nikolich M.P."/>
            <person name="Richardson P."/>
        </authorList>
    </citation>
    <scope>NUCLEOTIDE SEQUENCE [LARGE SCALE GENOMIC DNA]</scope>
    <source>
        <strain>PB1/+</strain>
    </source>
</reference>
<gene>
    <name evidence="1" type="primary">xylA</name>
    <name type="ordered locus">YPTS_4108</name>
</gene>
<accession>B2K7D2</accession>
<organism>
    <name type="scientific">Yersinia pseudotuberculosis serotype IB (strain PB1/+)</name>
    <dbReference type="NCBI Taxonomy" id="502801"/>
    <lineage>
        <taxon>Bacteria</taxon>
        <taxon>Pseudomonadati</taxon>
        <taxon>Pseudomonadota</taxon>
        <taxon>Gammaproteobacteria</taxon>
        <taxon>Enterobacterales</taxon>
        <taxon>Yersiniaceae</taxon>
        <taxon>Yersinia</taxon>
    </lineage>
</organism>
<feature type="chain" id="PRO_1000200316" description="Xylose isomerase">
    <location>
        <begin position="1"/>
        <end position="439"/>
    </location>
</feature>
<feature type="active site" evidence="1">
    <location>
        <position position="101"/>
    </location>
</feature>
<feature type="active site" evidence="1">
    <location>
        <position position="104"/>
    </location>
</feature>
<feature type="binding site" evidence="1">
    <location>
        <position position="232"/>
    </location>
    <ligand>
        <name>Mg(2+)</name>
        <dbReference type="ChEBI" id="CHEBI:18420"/>
        <label>1</label>
    </ligand>
</feature>
<feature type="binding site" evidence="1">
    <location>
        <position position="268"/>
    </location>
    <ligand>
        <name>Mg(2+)</name>
        <dbReference type="ChEBI" id="CHEBI:18420"/>
        <label>1</label>
    </ligand>
</feature>
<feature type="binding site" evidence="1">
    <location>
        <position position="268"/>
    </location>
    <ligand>
        <name>Mg(2+)</name>
        <dbReference type="ChEBI" id="CHEBI:18420"/>
        <label>2</label>
    </ligand>
</feature>
<feature type="binding site" evidence="1">
    <location>
        <position position="271"/>
    </location>
    <ligand>
        <name>Mg(2+)</name>
        <dbReference type="ChEBI" id="CHEBI:18420"/>
        <label>2</label>
    </ligand>
</feature>
<feature type="binding site" evidence="1">
    <location>
        <position position="296"/>
    </location>
    <ligand>
        <name>Mg(2+)</name>
        <dbReference type="ChEBI" id="CHEBI:18420"/>
        <label>1</label>
    </ligand>
</feature>
<feature type="binding site" evidence="1">
    <location>
        <position position="307"/>
    </location>
    <ligand>
        <name>Mg(2+)</name>
        <dbReference type="ChEBI" id="CHEBI:18420"/>
        <label>2</label>
    </ligand>
</feature>
<feature type="binding site" evidence="1">
    <location>
        <position position="309"/>
    </location>
    <ligand>
        <name>Mg(2+)</name>
        <dbReference type="ChEBI" id="CHEBI:18420"/>
        <label>2</label>
    </ligand>
</feature>
<feature type="binding site" evidence="1">
    <location>
        <position position="339"/>
    </location>
    <ligand>
        <name>Mg(2+)</name>
        <dbReference type="ChEBI" id="CHEBI:18420"/>
        <label>1</label>
    </ligand>
</feature>
<protein>
    <recommendedName>
        <fullName evidence="1">Xylose isomerase</fullName>
        <ecNumber evidence="1">5.3.1.5</ecNumber>
    </recommendedName>
</protein>